<accession>B8F4C0</accession>
<dbReference type="EC" id="2.1.1.166" evidence="1"/>
<dbReference type="EMBL" id="CP001321">
    <property type="protein sequence ID" value="ACL32172.1"/>
    <property type="molecule type" value="Genomic_DNA"/>
</dbReference>
<dbReference type="RefSeq" id="WP_010786866.1">
    <property type="nucleotide sequence ID" value="NC_011852.1"/>
</dbReference>
<dbReference type="SMR" id="B8F4C0"/>
<dbReference type="STRING" id="557723.HAPS_0511"/>
<dbReference type="KEGG" id="hap:HAPS_0511"/>
<dbReference type="HOGENOM" id="CLU_009422_4_0_6"/>
<dbReference type="Proteomes" id="UP000006743">
    <property type="component" value="Chromosome"/>
</dbReference>
<dbReference type="GO" id="GO:0005737">
    <property type="term" value="C:cytoplasm"/>
    <property type="evidence" value="ECO:0007669"/>
    <property type="project" value="UniProtKB-SubCell"/>
</dbReference>
<dbReference type="GO" id="GO:0008650">
    <property type="term" value="F:rRNA (uridine-2'-O-)-methyltransferase activity"/>
    <property type="evidence" value="ECO:0007669"/>
    <property type="project" value="UniProtKB-UniRule"/>
</dbReference>
<dbReference type="CDD" id="cd02440">
    <property type="entry name" value="AdoMet_MTases"/>
    <property type="match status" value="1"/>
</dbReference>
<dbReference type="FunFam" id="3.40.50.150:FF:000005">
    <property type="entry name" value="Ribosomal RNA large subunit methyltransferase E"/>
    <property type="match status" value="1"/>
</dbReference>
<dbReference type="Gene3D" id="3.40.50.150">
    <property type="entry name" value="Vaccinia Virus protein VP39"/>
    <property type="match status" value="1"/>
</dbReference>
<dbReference type="HAMAP" id="MF_01547">
    <property type="entry name" value="RNA_methyltr_E"/>
    <property type="match status" value="1"/>
</dbReference>
<dbReference type="InterPro" id="IPR050082">
    <property type="entry name" value="RNA_methyltr_RlmE"/>
</dbReference>
<dbReference type="InterPro" id="IPR002877">
    <property type="entry name" value="RNA_MeTrfase_FtsJ_dom"/>
</dbReference>
<dbReference type="InterPro" id="IPR015507">
    <property type="entry name" value="rRNA-MeTfrase_E"/>
</dbReference>
<dbReference type="InterPro" id="IPR004512">
    <property type="entry name" value="rRNA_MeTrfase_gammaproteobac"/>
</dbReference>
<dbReference type="InterPro" id="IPR029063">
    <property type="entry name" value="SAM-dependent_MTases_sf"/>
</dbReference>
<dbReference type="NCBIfam" id="NF008390">
    <property type="entry name" value="PRK11188.1"/>
    <property type="match status" value="1"/>
</dbReference>
<dbReference type="NCBIfam" id="TIGR00438">
    <property type="entry name" value="rrmJ"/>
    <property type="match status" value="1"/>
</dbReference>
<dbReference type="PANTHER" id="PTHR10920">
    <property type="entry name" value="RIBOSOMAL RNA METHYLTRANSFERASE"/>
    <property type="match status" value="1"/>
</dbReference>
<dbReference type="PANTHER" id="PTHR10920:SF18">
    <property type="entry name" value="RRNA METHYLTRANSFERASE 2, MITOCHONDRIAL"/>
    <property type="match status" value="1"/>
</dbReference>
<dbReference type="Pfam" id="PF01728">
    <property type="entry name" value="FtsJ"/>
    <property type="match status" value="1"/>
</dbReference>
<dbReference type="PIRSF" id="PIRSF005461">
    <property type="entry name" value="23S_rRNA_mtase"/>
    <property type="match status" value="1"/>
</dbReference>
<dbReference type="SUPFAM" id="SSF53335">
    <property type="entry name" value="S-adenosyl-L-methionine-dependent methyltransferases"/>
    <property type="match status" value="1"/>
</dbReference>
<comment type="function">
    <text evidence="1">Specifically methylates the uridine in position 2552 of 23S rRNA at the 2'-O position of the ribose in the fully assembled 50S ribosomal subunit.</text>
</comment>
<comment type="catalytic activity">
    <reaction evidence="1">
        <text>uridine(2552) in 23S rRNA + S-adenosyl-L-methionine = 2'-O-methyluridine(2552) in 23S rRNA + S-adenosyl-L-homocysteine + H(+)</text>
        <dbReference type="Rhea" id="RHEA:42720"/>
        <dbReference type="Rhea" id="RHEA-COMP:10202"/>
        <dbReference type="Rhea" id="RHEA-COMP:10203"/>
        <dbReference type="ChEBI" id="CHEBI:15378"/>
        <dbReference type="ChEBI" id="CHEBI:57856"/>
        <dbReference type="ChEBI" id="CHEBI:59789"/>
        <dbReference type="ChEBI" id="CHEBI:65315"/>
        <dbReference type="ChEBI" id="CHEBI:74478"/>
        <dbReference type="EC" id="2.1.1.166"/>
    </reaction>
</comment>
<comment type="subcellular location">
    <subcellularLocation>
        <location evidence="1">Cytoplasm</location>
    </subcellularLocation>
</comment>
<comment type="similarity">
    <text evidence="1">Belongs to the class I-like SAM-binding methyltransferase superfamily. RNA methyltransferase RlmE family.</text>
</comment>
<reference key="1">
    <citation type="journal article" date="2009" name="J. Bacteriol.">
        <title>Complete genome sequence of Haemophilus parasuis SH0165.</title>
        <authorList>
            <person name="Yue M."/>
            <person name="Yang F."/>
            <person name="Yang J."/>
            <person name="Bei W."/>
            <person name="Cai X."/>
            <person name="Chen L."/>
            <person name="Dong J."/>
            <person name="Zhou R."/>
            <person name="Jin M."/>
            <person name="Jin Q."/>
            <person name="Chen H."/>
        </authorList>
    </citation>
    <scope>NUCLEOTIDE SEQUENCE [LARGE SCALE GENOMIC DNA]</scope>
    <source>
        <strain>SH0165</strain>
    </source>
</reference>
<gene>
    <name evidence="1" type="primary">rlmE</name>
    <name evidence="1" type="synonym">ftsJ</name>
    <name evidence="1" type="synonym">rrmJ</name>
    <name type="ordered locus">HAPS_0511</name>
</gene>
<feature type="chain" id="PRO_1000185297" description="Ribosomal RNA large subunit methyltransferase E">
    <location>
        <begin position="1"/>
        <end position="208"/>
    </location>
</feature>
<feature type="active site" description="Proton acceptor" evidence="1">
    <location>
        <position position="163"/>
    </location>
</feature>
<feature type="binding site" evidence="1">
    <location>
        <position position="62"/>
    </location>
    <ligand>
        <name>S-adenosyl-L-methionine</name>
        <dbReference type="ChEBI" id="CHEBI:59789"/>
    </ligand>
</feature>
<feature type="binding site" evidence="1">
    <location>
        <position position="64"/>
    </location>
    <ligand>
        <name>S-adenosyl-L-methionine</name>
        <dbReference type="ChEBI" id="CHEBI:59789"/>
    </ligand>
</feature>
<feature type="binding site" evidence="1">
    <location>
        <position position="82"/>
    </location>
    <ligand>
        <name>S-adenosyl-L-methionine</name>
        <dbReference type="ChEBI" id="CHEBI:59789"/>
    </ligand>
</feature>
<feature type="binding site" evidence="1">
    <location>
        <position position="98"/>
    </location>
    <ligand>
        <name>S-adenosyl-L-methionine</name>
        <dbReference type="ChEBI" id="CHEBI:59789"/>
    </ligand>
</feature>
<feature type="binding site" evidence="1">
    <location>
        <position position="123"/>
    </location>
    <ligand>
        <name>S-adenosyl-L-methionine</name>
        <dbReference type="ChEBI" id="CHEBI:59789"/>
    </ligand>
</feature>
<evidence type="ECO:0000255" key="1">
    <source>
        <dbReference type="HAMAP-Rule" id="MF_01547"/>
    </source>
</evidence>
<proteinExistence type="inferred from homology"/>
<organism>
    <name type="scientific">Glaesserella parasuis serovar 5 (strain SH0165)</name>
    <name type="common">Haemophilus parasuis</name>
    <dbReference type="NCBI Taxonomy" id="557723"/>
    <lineage>
        <taxon>Bacteria</taxon>
        <taxon>Pseudomonadati</taxon>
        <taxon>Pseudomonadota</taxon>
        <taxon>Gammaproteobacteria</taxon>
        <taxon>Pasteurellales</taxon>
        <taxon>Pasteurellaceae</taxon>
        <taxon>Glaesserella</taxon>
    </lineage>
</organism>
<protein>
    <recommendedName>
        <fullName evidence="1">Ribosomal RNA large subunit methyltransferase E</fullName>
        <ecNumber evidence="1">2.1.1.166</ecNumber>
    </recommendedName>
    <alternativeName>
        <fullName evidence="1">23S rRNA Um2552 methyltransferase</fullName>
    </alternativeName>
    <alternativeName>
        <fullName evidence="1">rRNA (uridine-2'-O-)-methyltransferase</fullName>
    </alternativeName>
</protein>
<sequence>MGRKRSASSSRWLAEHFKDQFVQKAHKQKLRSRAYFKLDEIQQTDRLFKHGMTVVDLGAAPGGWSQYVVTQIGDKGRVIACDILDMNPIVGVDFLQGDFCEESVLNALLERVGEGKVDVVMSDMAPNFSGMSSVDIPRAMYLVELALDMCRQVLAPKGSFVVKVFQGEGFDDYLREIRSLFNVVKVRKPEASRDRSREVYIVATGYKG</sequence>
<keyword id="KW-0963">Cytoplasm</keyword>
<keyword id="KW-0489">Methyltransferase</keyword>
<keyword id="KW-1185">Reference proteome</keyword>
<keyword id="KW-0698">rRNA processing</keyword>
<keyword id="KW-0949">S-adenosyl-L-methionine</keyword>
<keyword id="KW-0808">Transferase</keyword>
<name>RLME_GLAP5</name>